<accession>A0PXV1</accession>
<gene>
    <name evidence="1" type="primary">rplV</name>
    <name type="ordered locus">NT01CX_1120</name>
</gene>
<name>RL22_CLONN</name>
<keyword id="KW-1185">Reference proteome</keyword>
<keyword id="KW-0687">Ribonucleoprotein</keyword>
<keyword id="KW-0689">Ribosomal protein</keyword>
<keyword id="KW-0694">RNA-binding</keyword>
<keyword id="KW-0699">rRNA-binding</keyword>
<comment type="function">
    <text evidence="1">This protein binds specifically to 23S rRNA; its binding is stimulated by other ribosomal proteins, e.g. L4, L17, and L20. It is important during the early stages of 50S assembly. It makes multiple contacts with different domains of the 23S rRNA in the assembled 50S subunit and ribosome (By similarity).</text>
</comment>
<comment type="function">
    <text evidence="1">The globular domain of the protein is located near the polypeptide exit tunnel on the outside of the subunit, while an extended beta-hairpin is found that lines the wall of the exit tunnel in the center of the 70S ribosome.</text>
</comment>
<comment type="subunit">
    <text evidence="1">Part of the 50S ribosomal subunit.</text>
</comment>
<comment type="similarity">
    <text evidence="1">Belongs to the universal ribosomal protein uL22 family.</text>
</comment>
<feature type="chain" id="PRO_1000052561" description="Large ribosomal subunit protein uL22">
    <location>
        <begin position="1"/>
        <end position="111"/>
    </location>
</feature>
<organism>
    <name type="scientific">Clostridium novyi (strain NT)</name>
    <dbReference type="NCBI Taxonomy" id="386415"/>
    <lineage>
        <taxon>Bacteria</taxon>
        <taxon>Bacillati</taxon>
        <taxon>Bacillota</taxon>
        <taxon>Clostridia</taxon>
        <taxon>Eubacteriales</taxon>
        <taxon>Clostridiaceae</taxon>
        <taxon>Clostridium</taxon>
    </lineage>
</organism>
<sequence>MEARAIAKYVRMSPRKVRVVLDLVRGKNVSEAFAILKYTPKDAATVVLKVLKSAVANAENNFNLDVNKLYIAEAYANQGPTLKRFKPRAQGRAYSIMKRTSHVTLVVKERA</sequence>
<dbReference type="EMBL" id="CP000382">
    <property type="protein sequence ID" value="ABK60912.1"/>
    <property type="molecule type" value="Genomic_DNA"/>
</dbReference>
<dbReference type="RefSeq" id="WP_011721220.1">
    <property type="nucleotide sequence ID" value="NC_008593.1"/>
</dbReference>
<dbReference type="SMR" id="A0PXV1"/>
<dbReference type="STRING" id="386415.NT01CX_1120"/>
<dbReference type="KEGG" id="cno:NT01CX_1120"/>
<dbReference type="eggNOG" id="COG0091">
    <property type="taxonomic scope" value="Bacteria"/>
</dbReference>
<dbReference type="HOGENOM" id="CLU_083987_3_3_9"/>
<dbReference type="Proteomes" id="UP000008220">
    <property type="component" value="Chromosome"/>
</dbReference>
<dbReference type="GO" id="GO:0022625">
    <property type="term" value="C:cytosolic large ribosomal subunit"/>
    <property type="evidence" value="ECO:0007669"/>
    <property type="project" value="TreeGrafter"/>
</dbReference>
<dbReference type="GO" id="GO:0019843">
    <property type="term" value="F:rRNA binding"/>
    <property type="evidence" value="ECO:0007669"/>
    <property type="project" value="UniProtKB-UniRule"/>
</dbReference>
<dbReference type="GO" id="GO:0003735">
    <property type="term" value="F:structural constituent of ribosome"/>
    <property type="evidence" value="ECO:0007669"/>
    <property type="project" value="InterPro"/>
</dbReference>
<dbReference type="GO" id="GO:0006412">
    <property type="term" value="P:translation"/>
    <property type="evidence" value="ECO:0007669"/>
    <property type="project" value="UniProtKB-UniRule"/>
</dbReference>
<dbReference type="CDD" id="cd00336">
    <property type="entry name" value="Ribosomal_L22"/>
    <property type="match status" value="1"/>
</dbReference>
<dbReference type="FunFam" id="3.90.470.10:FF:000011">
    <property type="entry name" value="50S ribosomal protein L22"/>
    <property type="match status" value="1"/>
</dbReference>
<dbReference type="Gene3D" id="3.90.470.10">
    <property type="entry name" value="Ribosomal protein L22/L17"/>
    <property type="match status" value="1"/>
</dbReference>
<dbReference type="HAMAP" id="MF_01331_B">
    <property type="entry name" value="Ribosomal_uL22_B"/>
    <property type="match status" value="1"/>
</dbReference>
<dbReference type="InterPro" id="IPR001063">
    <property type="entry name" value="Ribosomal_uL22"/>
</dbReference>
<dbReference type="InterPro" id="IPR005727">
    <property type="entry name" value="Ribosomal_uL22_bac/chlpt-type"/>
</dbReference>
<dbReference type="InterPro" id="IPR047867">
    <property type="entry name" value="Ribosomal_uL22_bac/org-type"/>
</dbReference>
<dbReference type="InterPro" id="IPR018260">
    <property type="entry name" value="Ribosomal_uL22_CS"/>
</dbReference>
<dbReference type="InterPro" id="IPR036394">
    <property type="entry name" value="Ribosomal_uL22_sf"/>
</dbReference>
<dbReference type="NCBIfam" id="TIGR01044">
    <property type="entry name" value="rplV_bact"/>
    <property type="match status" value="1"/>
</dbReference>
<dbReference type="PANTHER" id="PTHR13501">
    <property type="entry name" value="CHLOROPLAST 50S RIBOSOMAL PROTEIN L22-RELATED"/>
    <property type="match status" value="1"/>
</dbReference>
<dbReference type="PANTHER" id="PTHR13501:SF8">
    <property type="entry name" value="LARGE RIBOSOMAL SUBUNIT PROTEIN UL22M"/>
    <property type="match status" value="1"/>
</dbReference>
<dbReference type="Pfam" id="PF00237">
    <property type="entry name" value="Ribosomal_L22"/>
    <property type="match status" value="1"/>
</dbReference>
<dbReference type="SUPFAM" id="SSF54843">
    <property type="entry name" value="Ribosomal protein L22"/>
    <property type="match status" value="1"/>
</dbReference>
<dbReference type="PROSITE" id="PS00464">
    <property type="entry name" value="RIBOSOMAL_L22"/>
    <property type="match status" value="1"/>
</dbReference>
<evidence type="ECO:0000255" key="1">
    <source>
        <dbReference type="HAMAP-Rule" id="MF_01331"/>
    </source>
</evidence>
<evidence type="ECO:0000305" key="2"/>
<proteinExistence type="inferred from homology"/>
<reference key="1">
    <citation type="journal article" date="2006" name="Nat. Biotechnol.">
        <title>The genome and transcriptomes of the anti-tumor agent Clostridium novyi-NT.</title>
        <authorList>
            <person name="Bettegowda C."/>
            <person name="Huang X."/>
            <person name="Lin J."/>
            <person name="Cheong I."/>
            <person name="Kohli M."/>
            <person name="Szabo S.A."/>
            <person name="Zhang X."/>
            <person name="Diaz L.A. Jr."/>
            <person name="Velculescu V.E."/>
            <person name="Parmigiani G."/>
            <person name="Kinzler K.W."/>
            <person name="Vogelstein B."/>
            <person name="Zhou S."/>
        </authorList>
    </citation>
    <scope>NUCLEOTIDE SEQUENCE [LARGE SCALE GENOMIC DNA]</scope>
    <source>
        <strain>NT</strain>
    </source>
</reference>
<protein>
    <recommendedName>
        <fullName evidence="1">Large ribosomal subunit protein uL22</fullName>
    </recommendedName>
    <alternativeName>
        <fullName evidence="2">50S ribosomal protein L22</fullName>
    </alternativeName>
</protein>